<dbReference type="EMBL" id="AB493581">
    <property type="protein sequence ID" value="BAH30419.1"/>
    <property type="molecule type" value="mRNA"/>
</dbReference>
<dbReference type="EMBL" id="AC004684">
    <property type="protein sequence ID" value="AAC23629.1"/>
    <property type="molecule type" value="Genomic_DNA"/>
</dbReference>
<dbReference type="EMBL" id="CP002685">
    <property type="protein sequence ID" value="AEC09422.1"/>
    <property type="molecule type" value="Genomic_DNA"/>
</dbReference>
<dbReference type="EMBL" id="BT030014">
    <property type="protein sequence ID" value="ABN04752.1"/>
    <property type="molecule type" value="mRNA"/>
</dbReference>
<dbReference type="PIR" id="T02525">
    <property type="entry name" value="T02525"/>
</dbReference>
<dbReference type="RefSeq" id="NP_181295.1">
    <property type="nucleotide sequence ID" value="NM_129315.4"/>
</dbReference>
<dbReference type="BioGRID" id="3680">
    <property type="interactions" value="1"/>
</dbReference>
<dbReference type="STRING" id="3702.O80928"/>
<dbReference type="iPTMnet" id="O80928"/>
<dbReference type="PaxDb" id="3702-AT2G37590.1"/>
<dbReference type="ProteomicsDB" id="222109"/>
<dbReference type="EnsemblPlants" id="AT2G37590.1">
    <property type="protein sequence ID" value="AT2G37590.1"/>
    <property type="gene ID" value="AT2G37590"/>
</dbReference>
<dbReference type="GeneID" id="818336"/>
<dbReference type="Gramene" id="AT2G37590.1">
    <property type="protein sequence ID" value="AT2G37590.1"/>
    <property type="gene ID" value="AT2G37590"/>
</dbReference>
<dbReference type="KEGG" id="ath:AT2G37590"/>
<dbReference type="Araport" id="AT2G37590"/>
<dbReference type="TAIR" id="AT2G37590">
    <property type="gene designation" value="DOF2.4"/>
</dbReference>
<dbReference type="eggNOG" id="ENOG502QTHW">
    <property type="taxonomic scope" value="Eukaryota"/>
</dbReference>
<dbReference type="HOGENOM" id="CLU_036438_0_3_1"/>
<dbReference type="InParanoid" id="O80928"/>
<dbReference type="OMA" id="IHMGASG"/>
<dbReference type="PhylomeDB" id="O80928"/>
<dbReference type="PRO" id="PR:O80928"/>
<dbReference type="Proteomes" id="UP000006548">
    <property type="component" value="Chromosome 2"/>
</dbReference>
<dbReference type="ExpressionAtlas" id="O80928">
    <property type="expression patterns" value="baseline and differential"/>
</dbReference>
<dbReference type="GO" id="GO:0005634">
    <property type="term" value="C:nucleus"/>
    <property type="evidence" value="ECO:0000314"/>
    <property type="project" value="TAIR"/>
</dbReference>
<dbReference type="GO" id="GO:0055044">
    <property type="term" value="C:symplast"/>
    <property type="evidence" value="ECO:0007669"/>
    <property type="project" value="UniProtKB-SubCell"/>
</dbReference>
<dbReference type="GO" id="GO:0003700">
    <property type="term" value="F:DNA-binding transcription factor activity"/>
    <property type="evidence" value="ECO:0000250"/>
    <property type="project" value="TAIR"/>
</dbReference>
<dbReference type="GO" id="GO:0000976">
    <property type="term" value="F:transcription cis-regulatory region binding"/>
    <property type="evidence" value="ECO:0000353"/>
    <property type="project" value="TAIR"/>
</dbReference>
<dbReference type="GO" id="GO:0008270">
    <property type="term" value="F:zinc ion binding"/>
    <property type="evidence" value="ECO:0007669"/>
    <property type="project" value="UniProtKB-KW"/>
</dbReference>
<dbReference type="GO" id="GO:0010497">
    <property type="term" value="P:plasmodesmata-mediated intercellular transport"/>
    <property type="evidence" value="ECO:0000314"/>
    <property type="project" value="TAIR"/>
</dbReference>
<dbReference type="GO" id="GO:0006355">
    <property type="term" value="P:regulation of DNA-templated transcription"/>
    <property type="evidence" value="ECO:0000304"/>
    <property type="project" value="TAIR"/>
</dbReference>
<dbReference type="GO" id="GO:0090057">
    <property type="term" value="P:root radial pattern formation"/>
    <property type="evidence" value="ECO:0000316"/>
    <property type="project" value="TAIR"/>
</dbReference>
<dbReference type="InterPro" id="IPR045174">
    <property type="entry name" value="Dof"/>
</dbReference>
<dbReference type="InterPro" id="IPR003851">
    <property type="entry name" value="Znf_Dof"/>
</dbReference>
<dbReference type="PANTHER" id="PTHR31992">
    <property type="entry name" value="DOF ZINC FINGER PROTEIN DOF1.4-RELATED"/>
    <property type="match status" value="1"/>
</dbReference>
<dbReference type="PANTHER" id="PTHR31992:SF215">
    <property type="entry name" value="DOF ZINC FINGER PROTEIN DOF2.4"/>
    <property type="match status" value="1"/>
</dbReference>
<dbReference type="Pfam" id="PF02701">
    <property type="entry name" value="Zn_ribbon_Dof"/>
    <property type="match status" value="1"/>
</dbReference>
<dbReference type="PROSITE" id="PS01361">
    <property type="entry name" value="ZF_DOF_1"/>
    <property type="match status" value="1"/>
</dbReference>
<dbReference type="PROSITE" id="PS50884">
    <property type="entry name" value="ZF_DOF_2"/>
    <property type="match status" value="1"/>
</dbReference>
<comment type="function">
    <text evidence="1 4 5">Transcription factor that binds specifically to a 5'-AA[AG]G-3' consensus core sequence (By similarity). Probably involved in early processes for vascular development (PubMed:17583520). The PEAR proteins (e.g. DOF2.4, DOF5.1, DOF3.2, DOF1.1, DOF5.6 and DOF5.3) activate gene expression that promotes radial growth of protophloem sieve elements. Triggers the transcription of HD-ZIP III genes, especially in the central domain of vascular tissue (PubMed:30626969).</text>
</comment>
<comment type="subcellular location">
    <subcellularLocation>
        <location evidence="2">Nucleus</location>
    </subcellularLocation>
    <subcellularLocation>
        <location evidence="5">Symplast</location>
    </subcellularLocation>
    <text evidence="5">Mobile protein observed in symplastic trafficking; movements are repressed by HD-ZIP III proteins.</text>
</comment>
<comment type="tissue specificity">
    <text evidence="4 5">Specific to the vascular tissues (PubMed:17583520). The PEAR proteins (e.g. DOF2.4, DOF5.1, DOF3.2, DOF1.1, DOF5.6 and DOF5.3) form a short-range concentration gradient that peaks at protophloem sieve elements (PSE) (PubMed:30626969).</text>
</comment>
<comment type="developmental stage">
    <text evidence="4">Specific to the midveins, containing narrow procambial cell files. Expressed in procambial cells of leaf primordia, roots and embryos, prior to the completion of xylem differentiation.</text>
</comment>
<comment type="induction">
    <text evidence="5">By cytokinin in procambium. Antagonized by the HD-ZIP III proteins and by mobile miR165 and miR166 microRNAs.</text>
</comment>
<comment type="disruption phenotype">
    <text evidence="5">The pear1 pear2 tmo6 triple mutant variably displays reduced radial growth. The pear1 pear2 dof6 tmo6 quadruple mutant plants showed a greater uniform reduction in radial growth, associated with compromised symplastic trafficking.</text>
</comment>
<evidence type="ECO:0000250" key="1">
    <source>
        <dbReference type="UniProtKB" id="Q9M2U1"/>
    </source>
</evidence>
<evidence type="ECO:0000255" key="2">
    <source>
        <dbReference type="PROSITE-ProRule" id="PRU00071"/>
    </source>
</evidence>
<evidence type="ECO:0000256" key="3">
    <source>
        <dbReference type="SAM" id="MobiDB-lite"/>
    </source>
</evidence>
<evidence type="ECO:0000269" key="4">
    <source>
    </source>
</evidence>
<evidence type="ECO:0000269" key="5">
    <source>
    </source>
</evidence>
<evidence type="ECO:0000303" key="6">
    <source>
    </source>
</evidence>
<evidence type="ECO:0000303" key="7">
    <source>
    </source>
</evidence>
<evidence type="ECO:0000312" key="8">
    <source>
        <dbReference type="Araport" id="AT2G37590"/>
    </source>
</evidence>
<evidence type="ECO:0000312" key="9">
    <source>
        <dbReference type="EMBL" id="AAC23629.1"/>
    </source>
</evidence>
<keyword id="KW-0238">DNA-binding</keyword>
<keyword id="KW-0479">Metal-binding</keyword>
<keyword id="KW-0539">Nucleus</keyword>
<keyword id="KW-1185">Reference proteome</keyword>
<keyword id="KW-0804">Transcription</keyword>
<keyword id="KW-0805">Transcription regulation</keyword>
<keyword id="KW-0862">Zinc</keyword>
<keyword id="KW-0863">Zinc-finger</keyword>
<accession>O80928</accession>
<accession>A2RVM3</accession>
<accession>C0SV78</accession>
<protein>
    <recommendedName>
        <fullName evidence="6">Dof zinc finger protein DOF2.4</fullName>
        <shortName evidence="6">AtDOF2.4</shortName>
    </recommendedName>
    <alternativeName>
        <fullName evidence="7">Protein PHLOEM EARLY DOF 1</fullName>
    </alternativeName>
</protein>
<name>DOF24_ARATH</name>
<organism>
    <name type="scientific">Arabidopsis thaliana</name>
    <name type="common">Mouse-ear cress</name>
    <dbReference type="NCBI Taxonomy" id="3702"/>
    <lineage>
        <taxon>Eukaryota</taxon>
        <taxon>Viridiplantae</taxon>
        <taxon>Streptophyta</taxon>
        <taxon>Embryophyta</taxon>
        <taxon>Tracheophyta</taxon>
        <taxon>Spermatophyta</taxon>
        <taxon>Magnoliopsida</taxon>
        <taxon>eudicotyledons</taxon>
        <taxon>Gunneridae</taxon>
        <taxon>Pentapetalae</taxon>
        <taxon>rosids</taxon>
        <taxon>malvids</taxon>
        <taxon>Brassicales</taxon>
        <taxon>Brassicaceae</taxon>
        <taxon>Camelineae</taxon>
        <taxon>Arabidopsis</taxon>
    </lineage>
</organism>
<proteinExistence type="evidence at transcript level"/>
<feature type="chain" id="PRO_0000074275" description="Dof zinc finger protein DOF2.4">
    <location>
        <begin position="1"/>
        <end position="330"/>
    </location>
</feature>
<feature type="zinc finger region" description="Dof-type" evidence="2">
    <location>
        <begin position="89"/>
        <end position="143"/>
    </location>
</feature>
<feature type="region of interest" description="Disordered" evidence="3">
    <location>
        <begin position="14"/>
        <end position="70"/>
    </location>
</feature>
<feature type="region of interest" description="Disordered" evidence="3">
    <location>
        <begin position="133"/>
        <end position="165"/>
    </location>
</feature>
<feature type="region of interest" description="Disordered" evidence="3">
    <location>
        <begin position="255"/>
        <end position="276"/>
    </location>
</feature>
<feature type="compositionally biased region" description="Polar residues" evidence="3">
    <location>
        <begin position="14"/>
        <end position="25"/>
    </location>
</feature>
<feature type="compositionally biased region" description="Low complexity" evidence="3">
    <location>
        <begin position="40"/>
        <end position="55"/>
    </location>
</feature>
<feature type="compositionally biased region" description="Gly residues" evidence="3">
    <location>
        <begin position="56"/>
        <end position="68"/>
    </location>
</feature>
<feature type="compositionally biased region" description="Low complexity" evidence="3">
    <location>
        <begin position="146"/>
        <end position="165"/>
    </location>
</feature>
<feature type="compositionally biased region" description="Polar residues" evidence="3">
    <location>
        <begin position="265"/>
        <end position="276"/>
    </location>
</feature>
<feature type="binding site" evidence="2">
    <location>
        <position position="91"/>
    </location>
    <ligand>
        <name>Zn(2+)</name>
        <dbReference type="ChEBI" id="CHEBI:29105"/>
    </ligand>
</feature>
<feature type="binding site" evidence="2">
    <location>
        <position position="94"/>
    </location>
    <ligand>
        <name>Zn(2+)</name>
        <dbReference type="ChEBI" id="CHEBI:29105"/>
    </ligand>
</feature>
<feature type="binding site" evidence="2">
    <location>
        <position position="116"/>
    </location>
    <ligand>
        <name>Zn(2+)</name>
        <dbReference type="ChEBI" id="CHEBI:29105"/>
    </ligand>
</feature>
<feature type="binding site" evidence="2">
    <location>
        <position position="119"/>
    </location>
    <ligand>
        <name>Zn(2+)</name>
        <dbReference type="ChEBI" id="CHEBI:29105"/>
    </ligand>
</feature>
<sequence length="330" mass="35331">MVFSSIQAYLDSSNWQQAPPSNYNHDGTGASANGGHVLRPQLQPQQQPQQQPHPNGSGGGGGGGGGSIRAGSMVDRARQANVALPEAALKCPRCESTNTKFCYFNNYSLTQPRHFCKTCRRYWTRGGALRNVPVGGGCRRNRRTKSNSNNNNNSTATSNNTSFSSGNASTISTILSSHYGGNQESILSQILSPARLMNPTYNHLGDLTSNTKTDNNMSLLNYGGLSQDLRSIHMGASGGSLMSCVDEWRSASYHQQSSMGGGNLEDSSNPNPSANGFYSFESPRITSASISSALASQFSSVKVEDNPYKWVNVNGNCSSWNDLSAFGSSR</sequence>
<reference key="1">
    <citation type="submission" date="2009-03" db="EMBL/GenBank/DDBJ databases">
        <title>ORF cloning and analysis of Arabidopsis transcription factor genes.</title>
        <authorList>
            <person name="Fujita M."/>
        </authorList>
    </citation>
    <scope>NUCLEOTIDE SEQUENCE [MRNA]</scope>
</reference>
<reference key="2">
    <citation type="journal article" date="1999" name="Nature">
        <title>Sequence and analysis of chromosome 2 of the plant Arabidopsis thaliana.</title>
        <authorList>
            <person name="Lin X."/>
            <person name="Kaul S."/>
            <person name="Rounsley S.D."/>
            <person name="Shea T.P."/>
            <person name="Benito M.-I."/>
            <person name="Town C.D."/>
            <person name="Fujii C.Y."/>
            <person name="Mason T.M."/>
            <person name="Bowman C.L."/>
            <person name="Barnstead M.E."/>
            <person name="Feldblyum T.V."/>
            <person name="Buell C.R."/>
            <person name="Ketchum K.A."/>
            <person name="Lee J.J."/>
            <person name="Ronning C.M."/>
            <person name="Koo H.L."/>
            <person name="Moffat K.S."/>
            <person name="Cronin L.A."/>
            <person name="Shen M."/>
            <person name="Pai G."/>
            <person name="Van Aken S."/>
            <person name="Umayam L."/>
            <person name="Tallon L.J."/>
            <person name="Gill J.E."/>
            <person name="Adams M.D."/>
            <person name="Carrera A.J."/>
            <person name="Creasy T.H."/>
            <person name="Goodman H.M."/>
            <person name="Somerville C.R."/>
            <person name="Copenhaver G.P."/>
            <person name="Preuss D."/>
            <person name="Nierman W.C."/>
            <person name="White O."/>
            <person name="Eisen J.A."/>
            <person name="Salzberg S.L."/>
            <person name="Fraser C.M."/>
            <person name="Venter J.C."/>
        </authorList>
    </citation>
    <scope>NUCLEOTIDE SEQUENCE [LARGE SCALE GENOMIC DNA]</scope>
    <source>
        <strain>cv. Columbia</strain>
    </source>
</reference>
<reference key="3">
    <citation type="journal article" date="2017" name="Plant J.">
        <title>Araport11: a complete reannotation of the Arabidopsis thaliana reference genome.</title>
        <authorList>
            <person name="Cheng C.Y."/>
            <person name="Krishnakumar V."/>
            <person name="Chan A.P."/>
            <person name="Thibaud-Nissen F."/>
            <person name="Schobel S."/>
            <person name="Town C.D."/>
        </authorList>
    </citation>
    <scope>GENOME REANNOTATION</scope>
    <source>
        <strain>cv. Columbia</strain>
    </source>
</reference>
<reference key="4">
    <citation type="submission" date="2007-01" db="EMBL/GenBank/DDBJ databases">
        <title>Arabidopsis ORF clones.</title>
        <authorList>
            <person name="Bautista V.R."/>
            <person name="Kim C.J."/>
            <person name="Chen H."/>
            <person name="Wu S.Y."/>
            <person name="De Los Reyes C."/>
            <person name="Ecker J.R."/>
        </authorList>
    </citation>
    <scope>NUCLEOTIDE SEQUENCE [LARGE SCALE MRNA]</scope>
    <source>
        <strain>cv. Columbia</strain>
    </source>
</reference>
<reference key="5">
    <citation type="journal article" date="2002" name="Trends Plant Sci.">
        <title>The Dof family of plant transcription factors.</title>
        <authorList>
            <person name="Yanagisawa S."/>
        </authorList>
    </citation>
    <scope>GENE FAMILY</scope>
    <scope>NOMENCLATURE</scope>
</reference>
<reference key="6">
    <citation type="journal article" date="2007" name="Plant Physiol. Biochem.">
        <title>Sequential activation of two Dof transcription factor gene promoters during vascular development in Arabidopsis thaliana.</title>
        <authorList>
            <person name="Konishi M."/>
            <person name="Yanagisawa S."/>
        </authorList>
    </citation>
    <scope>TISSUE SPECIFICITY</scope>
    <scope>DEVELOPMENTAL STAGE</scope>
    <source>
        <strain>cv. Columbia</strain>
    </source>
</reference>
<reference key="7">
    <citation type="journal article" date="2019" name="Nature">
        <title>Mobile PEAR transcription factors integrate positional cues to prime cambial growth.</title>
        <authorList>
            <person name="Miyashima S."/>
            <person name="Roszak P."/>
            <person name="Sevilem I."/>
            <person name="Toyokura K."/>
            <person name="Blob B."/>
            <person name="Heo J.-O."/>
            <person name="Mellor N."/>
            <person name="Help-Rinta-Rahko H."/>
            <person name="Otero S."/>
            <person name="Smet W."/>
            <person name="Boekschoten M."/>
            <person name="Hooiveld G."/>
            <person name="Hashimoto K."/>
            <person name="Smetana O."/>
            <person name="Siligato R."/>
            <person name="Wallner E.-S."/>
            <person name="Maehoenen A.P."/>
            <person name="Kondo Y."/>
            <person name="Melnyk C.W."/>
            <person name="Greb T."/>
            <person name="Nakajima K."/>
            <person name="Sozzani R."/>
            <person name="Bishopp A."/>
            <person name="De Rybel B."/>
            <person name="Helariutta Y."/>
        </authorList>
    </citation>
    <scope>FUNCTION</scope>
    <scope>DISRUPTION PHENOTYPE</scope>
    <scope>TISSUE SPECIFICITY</scope>
    <scope>INDUCTION BY CYTOKININ</scope>
    <scope>SUBCELLULAR LOCATION</scope>
</reference>
<gene>
    <name evidence="6" type="primary">DOF2.4</name>
    <name evidence="7" type="synonym">PEAR1</name>
    <name evidence="8" type="ordered locus">At2g37590</name>
    <name evidence="9" type="ORF">F13M22.9</name>
</gene>